<organism>
    <name type="scientific">Cereibacter sphaeroides</name>
    <name type="common">Rhodobacter sphaeroides</name>
    <dbReference type="NCBI Taxonomy" id="1063"/>
    <lineage>
        <taxon>Bacteria</taxon>
        <taxon>Pseudomonadati</taxon>
        <taxon>Pseudomonadota</taxon>
        <taxon>Alphaproteobacteria</taxon>
        <taxon>Rhodobacterales</taxon>
        <taxon>Paracoccaceae</taxon>
        <taxon>Cereibacter</taxon>
    </lineage>
</organism>
<name>GLTD_CERSP</name>
<feature type="chain" id="PRO_0000386547" description="Putative glutamate synthase [NADPH] small chain">
    <location>
        <begin position="1"/>
        <end position="413"/>
    </location>
</feature>
<feature type="binding site" evidence="2">
    <location>
        <position position="33"/>
    </location>
    <ligand>
        <name>[4Fe-4S] cluster</name>
        <dbReference type="ChEBI" id="CHEBI:49883"/>
    </ligand>
</feature>
<feature type="binding site" evidence="2">
    <location>
        <position position="37"/>
    </location>
    <ligand>
        <name>[4Fe-4S] cluster</name>
        <dbReference type="ChEBI" id="CHEBI:49883"/>
    </ligand>
</feature>
<feature type="binding site" evidence="2">
    <location>
        <position position="43"/>
    </location>
    <ligand>
        <name>[4Fe-4S] cluster</name>
        <dbReference type="ChEBI" id="CHEBI:49883"/>
    </ligand>
</feature>
<feature type="binding site" evidence="2">
    <location>
        <position position="47"/>
    </location>
    <ligand>
        <name>[4Fe-4S] cluster</name>
        <dbReference type="ChEBI" id="CHEBI:49883"/>
    </ligand>
</feature>
<comment type="catalytic activity">
    <reaction>
        <text>2 L-glutamate + NADP(+) = L-glutamine + 2-oxoglutarate + NADPH + H(+)</text>
        <dbReference type="Rhea" id="RHEA:15501"/>
        <dbReference type="ChEBI" id="CHEBI:15378"/>
        <dbReference type="ChEBI" id="CHEBI:16810"/>
        <dbReference type="ChEBI" id="CHEBI:29985"/>
        <dbReference type="ChEBI" id="CHEBI:57783"/>
        <dbReference type="ChEBI" id="CHEBI:58349"/>
        <dbReference type="ChEBI" id="CHEBI:58359"/>
        <dbReference type="EC" id="1.4.1.13"/>
    </reaction>
</comment>
<comment type="cofactor">
    <cofactor evidence="1">
        <name>[4Fe-4S] cluster</name>
        <dbReference type="ChEBI" id="CHEBI:49883"/>
    </cofactor>
    <text evidence="1">Binds 1 [4Fe-4S] cluster.</text>
</comment>
<comment type="pathway">
    <text>Amino-acid biosynthesis; L-glutamate biosynthesis via GLT pathway; L-glutamate from 2-oxoglutarate and L-glutamine (NADP(+) route): step 1/1.</text>
</comment>
<comment type="pathway">
    <text>Energy metabolism; nitrogen metabolism.</text>
</comment>
<comment type="subunit">
    <text evidence="1">Aggregate of 4 catalytic active heterodimers, consisting of a large and a small subunit.</text>
</comment>
<comment type="miscellaneous">
    <text evidence="1">Glutamine binds to the large subunit and transfers the amido group to 2-oxo-glutamate that apparently binds to the small subunit.</text>
</comment>
<comment type="caution">
    <text evidence="3">Lacks the 4Fe-4S ferredoxin-type domain found in GltD orthologs.</text>
</comment>
<proteinExistence type="inferred from homology"/>
<reference key="1">
    <citation type="journal article" date="1997" name="Sheng Wu Hua Xue Yu Sheng Wu Wu Li Xue Bao">
        <title>The nucleotide Sequence of gltD gene encoding the small subunit of Rhodobacter sphaeroides glutamate synthase.</title>
        <authorList>
            <person name="Lu T."/>
            <person name="Wu Y.Q."/>
            <person name="Song H.Y."/>
        </authorList>
    </citation>
    <scope>NUCLEOTIDE SEQUENCE [GENOMIC DNA]</scope>
    <source>
        <strain>601</strain>
    </source>
</reference>
<evidence type="ECO:0000250" key="1"/>
<evidence type="ECO:0000255" key="2"/>
<evidence type="ECO:0000305" key="3"/>
<protein>
    <recommendedName>
        <fullName>Putative glutamate synthase [NADPH] small chain</fullName>
        <ecNumber>1.4.1.13</ecNumber>
    </recommendedName>
    <alternativeName>
        <fullName>Glutamate synthase subunit beta</fullName>
        <shortName>GLTS beta chain</shortName>
    </alternativeName>
    <alternativeName>
        <fullName>NADPH-GOGAT</fullName>
    </alternativeName>
</protein>
<keyword id="KW-0028">Amino-acid biosynthesis</keyword>
<keyword id="KW-0314">Glutamate biosynthesis</keyword>
<keyword id="KW-0408">Iron</keyword>
<keyword id="KW-0411">Iron-sulfur</keyword>
<keyword id="KW-0479">Metal-binding</keyword>
<keyword id="KW-0521">NADP</keyword>
<keyword id="KW-0560">Oxidoreductase</keyword>
<accession>O08340</accession>
<gene>
    <name type="primary">gltD</name>
</gene>
<dbReference type="EC" id="1.4.1.13"/>
<dbReference type="EMBL" id="Y12481">
    <property type="protein sequence ID" value="CAA73084.1"/>
    <property type="molecule type" value="Genomic_DNA"/>
</dbReference>
<dbReference type="PIR" id="JE0142">
    <property type="entry name" value="JE0142"/>
</dbReference>
<dbReference type="SMR" id="O08340"/>
<dbReference type="UniPathway" id="UPA00045"/>
<dbReference type="UniPathway" id="UPA00634">
    <property type="reaction ID" value="UER00689"/>
</dbReference>
<dbReference type="GO" id="GO:0004355">
    <property type="term" value="F:glutamate synthase (NADPH) activity"/>
    <property type="evidence" value="ECO:0007669"/>
    <property type="project" value="UniProtKB-EC"/>
</dbReference>
<dbReference type="GO" id="GO:0051536">
    <property type="term" value="F:iron-sulfur cluster binding"/>
    <property type="evidence" value="ECO:0007669"/>
    <property type="project" value="UniProtKB-KW"/>
</dbReference>
<dbReference type="GO" id="GO:0046872">
    <property type="term" value="F:metal ion binding"/>
    <property type="evidence" value="ECO:0007669"/>
    <property type="project" value="UniProtKB-KW"/>
</dbReference>
<dbReference type="GO" id="GO:0097054">
    <property type="term" value="P:L-glutamate biosynthetic process"/>
    <property type="evidence" value="ECO:0007669"/>
    <property type="project" value="UniProtKB-UniPathway"/>
</dbReference>
<dbReference type="FunFam" id="3.50.50.60:FF:000041">
    <property type="entry name" value="Glutamate synthase, small subunit"/>
    <property type="match status" value="1"/>
</dbReference>
<dbReference type="Gene3D" id="1.10.1060.10">
    <property type="entry name" value="Alpha-helical ferredoxin"/>
    <property type="match status" value="1"/>
</dbReference>
<dbReference type="Gene3D" id="3.50.50.60">
    <property type="entry name" value="FAD/NAD(P)-binding domain"/>
    <property type="match status" value="2"/>
</dbReference>
<dbReference type="InterPro" id="IPR028261">
    <property type="entry name" value="DPD_II"/>
</dbReference>
<dbReference type="InterPro" id="IPR036188">
    <property type="entry name" value="FAD/NAD-bd_sf"/>
</dbReference>
<dbReference type="InterPro" id="IPR023753">
    <property type="entry name" value="FAD/NAD-binding_dom"/>
</dbReference>
<dbReference type="InterPro" id="IPR009051">
    <property type="entry name" value="Helical_ferredxn"/>
</dbReference>
<dbReference type="PANTHER" id="PTHR42783">
    <property type="entry name" value="GLUTAMATE SYNTHASE [NADPH] SMALL CHAIN"/>
    <property type="match status" value="1"/>
</dbReference>
<dbReference type="PANTHER" id="PTHR42783:SF3">
    <property type="entry name" value="GLUTAMATE SYNTHASE [NADPH] SMALL CHAIN-RELATED"/>
    <property type="match status" value="1"/>
</dbReference>
<dbReference type="Pfam" id="PF14691">
    <property type="entry name" value="Fer4_20"/>
    <property type="match status" value="1"/>
</dbReference>
<dbReference type="Pfam" id="PF07992">
    <property type="entry name" value="Pyr_redox_2"/>
    <property type="match status" value="1"/>
</dbReference>
<dbReference type="PRINTS" id="PR00419">
    <property type="entry name" value="ADXRDTASE"/>
</dbReference>
<dbReference type="SUPFAM" id="SSF46548">
    <property type="entry name" value="alpha-helical ferredoxin"/>
    <property type="match status" value="1"/>
</dbReference>
<dbReference type="SUPFAM" id="SSF51971">
    <property type="entry name" value="Nucleotide-binding domain"/>
    <property type="match status" value="1"/>
</dbReference>
<sequence>MAKEPMLQFVKMARETPEKRPRSLRSQDFHEICGRICPQDRLCEGNCVIEQSGHGTVTIGAVEKYITDTAWENGWVVPGKPAYERSESVGIIGAGPGGLAAADALRRAGLQVTVYDRYDRAGGLLTYGIPGFKLEKDVVARRVEQLEQAGVQFVLNCNVGEDLSFDAIRGQHDAVLIATGVYKQRDLAAPGVGSAGVVQALSYLTASNRRSFGDEVDDDGLDASGKRVVVIGGGDTAMDCVRTAIRQGATSVKCLYRRDRANMPGSQREVANAEEEGVEFVWLSAPRGFIAGDAVEGVIVQKMRLGEPDATGRQMPEIIEGADYVEPADLAIMALGFEPEDLPTLWGVPDLTVTRWGTIKADFRTHATSLPGVYAVGDIVRGASLVVWAIRDGRDAAQSILDYLAQPAVVAAE</sequence>